<dbReference type="EC" id="6.3.4.3" evidence="1"/>
<dbReference type="EMBL" id="CP000001">
    <property type="protein sequence ID" value="AAU18342.1"/>
    <property type="molecule type" value="Genomic_DNA"/>
</dbReference>
<dbReference type="RefSeq" id="WP_001985392.1">
    <property type="nucleotide sequence ID" value="NZ_CP009968.1"/>
</dbReference>
<dbReference type="SMR" id="Q63C61"/>
<dbReference type="KEGG" id="bcz:BCE33L1914"/>
<dbReference type="UniPathway" id="UPA00193"/>
<dbReference type="Proteomes" id="UP000002612">
    <property type="component" value="Chromosome"/>
</dbReference>
<dbReference type="GO" id="GO:0005524">
    <property type="term" value="F:ATP binding"/>
    <property type="evidence" value="ECO:0007669"/>
    <property type="project" value="UniProtKB-UniRule"/>
</dbReference>
<dbReference type="GO" id="GO:0004329">
    <property type="term" value="F:formate-tetrahydrofolate ligase activity"/>
    <property type="evidence" value="ECO:0007669"/>
    <property type="project" value="UniProtKB-UniRule"/>
</dbReference>
<dbReference type="GO" id="GO:0035999">
    <property type="term" value="P:tetrahydrofolate interconversion"/>
    <property type="evidence" value="ECO:0007669"/>
    <property type="project" value="UniProtKB-UniRule"/>
</dbReference>
<dbReference type="CDD" id="cd00477">
    <property type="entry name" value="FTHFS"/>
    <property type="match status" value="1"/>
</dbReference>
<dbReference type="FunFam" id="3.30.1510.10:FF:000001">
    <property type="entry name" value="Formate--tetrahydrofolate ligase"/>
    <property type="match status" value="1"/>
</dbReference>
<dbReference type="FunFam" id="3.10.410.10:FF:000001">
    <property type="entry name" value="Putative formate--tetrahydrofolate ligase"/>
    <property type="match status" value="1"/>
</dbReference>
<dbReference type="Gene3D" id="3.30.1510.10">
    <property type="entry name" value="Domain 2, N(10)-formyltetrahydrofolate synthetase"/>
    <property type="match status" value="1"/>
</dbReference>
<dbReference type="Gene3D" id="3.10.410.10">
    <property type="entry name" value="Formyltetrahydrofolate synthetase, domain 3"/>
    <property type="match status" value="1"/>
</dbReference>
<dbReference type="Gene3D" id="3.40.50.300">
    <property type="entry name" value="P-loop containing nucleotide triphosphate hydrolases"/>
    <property type="match status" value="1"/>
</dbReference>
<dbReference type="HAMAP" id="MF_01543">
    <property type="entry name" value="FTHFS"/>
    <property type="match status" value="1"/>
</dbReference>
<dbReference type="InterPro" id="IPR000559">
    <property type="entry name" value="Formate_THF_ligase"/>
</dbReference>
<dbReference type="InterPro" id="IPR020628">
    <property type="entry name" value="Formate_THF_ligase_CS"/>
</dbReference>
<dbReference type="InterPro" id="IPR027417">
    <property type="entry name" value="P-loop_NTPase"/>
</dbReference>
<dbReference type="NCBIfam" id="NF010030">
    <property type="entry name" value="PRK13505.1"/>
    <property type="match status" value="1"/>
</dbReference>
<dbReference type="Pfam" id="PF01268">
    <property type="entry name" value="FTHFS"/>
    <property type="match status" value="1"/>
</dbReference>
<dbReference type="SUPFAM" id="SSF52540">
    <property type="entry name" value="P-loop containing nucleoside triphosphate hydrolases"/>
    <property type="match status" value="1"/>
</dbReference>
<dbReference type="PROSITE" id="PS00721">
    <property type="entry name" value="FTHFS_1"/>
    <property type="match status" value="1"/>
</dbReference>
<dbReference type="PROSITE" id="PS00722">
    <property type="entry name" value="FTHFS_2"/>
    <property type="match status" value="1"/>
</dbReference>
<protein>
    <recommendedName>
        <fullName evidence="1">Formate--tetrahydrofolate ligase</fullName>
        <ecNumber evidence="1">6.3.4.3</ecNumber>
    </recommendedName>
    <alternativeName>
        <fullName evidence="1">Formyltetrahydrofolate synthetase</fullName>
        <shortName evidence="1">FHS</shortName>
        <shortName evidence="1">FTHFS</shortName>
    </alternativeName>
</protein>
<reference key="1">
    <citation type="journal article" date="2006" name="J. Bacteriol.">
        <title>Pathogenomic sequence analysis of Bacillus cereus and Bacillus thuringiensis isolates closely related to Bacillus anthracis.</title>
        <authorList>
            <person name="Han C.S."/>
            <person name="Xie G."/>
            <person name="Challacombe J.F."/>
            <person name="Altherr M.R."/>
            <person name="Bhotika S.S."/>
            <person name="Bruce D."/>
            <person name="Campbell C.S."/>
            <person name="Campbell M.L."/>
            <person name="Chen J."/>
            <person name="Chertkov O."/>
            <person name="Cleland C."/>
            <person name="Dimitrijevic M."/>
            <person name="Doggett N.A."/>
            <person name="Fawcett J.J."/>
            <person name="Glavina T."/>
            <person name="Goodwin L.A."/>
            <person name="Hill K.K."/>
            <person name="Hitchcock P."/>
            <person name="Jackson P.J."/>
            <person name="Keim P."/>
            <person name="Kewalramani A.R."/>
            <person name="Longmire J."/>
            <person name="Lucas S."/>
            <person name="Malfatti S."/>
            <person name="McMurry K."/>
            <person name="Meincke L.J."/>
            <person name="Misra M."/>
            <person name="Moseman B.L."/>
            <person name="Mundt M."/>
            <person name="Munk A.C."/>
            <person name="Okinaka R.T."/>
            <person name="Parson-Quintana B."/>
            <person name="Reilly L.P."/>
            <person name="Richardson P."/>
            <person name="Robinson D.L."/>
            <person name="Rubin E."/>
            <person name="Saunders E."/>
            <person name="Tapia R."/>
            <person name="Tesmer J.G."/>
            <person name="Thayer N."/>
            <person name="Thompson L.S."/>
            <person name="Tice H."/>
            <person name="Ticknor L.O."/>
            <person name="Wills P.L."/>
            <person name="Brettin T.S."/>
            <person name="Gilna P."/>
        </authorList>
    </citation>
    <scope>NUCLEOTIDE SEQUENCE [LARGE SCALE GENOMIC DNA]</scope>
    <source>
        <strain>ZK / E33L</strain>
    </source>
</reference>
<comment type="catalytic activity">
    <reaction evidence="1">
        <text>(6S)-5,6,7,8-tetrahydrofolate + formate + ATP = (6R)-10-formyltetrahydrofolate + ADP + phosphate</text>
        <dbReference type="Rhea" id="RHEA:20221"/>
        <dbReference type="ChEBI" id="CHEBI:15740"/>
        <dbReference type="ChEBI" id="CHEBI:30616"/>
        <dbReference type="ChEBI" id="CHEBI:43474"/>
        <dbReference type="ChEBI" id="CHEBI:57453"/>
        <dbReference type="ChEBI" id="CHEBI:195366"/>
        <dbReference type="ChEBI" id="CHEBI:456216"/>
        <dbReference type="EC" id="6.3.4.3"/>
    </reaction>
</comment>
<comment type="pathway">
    <text evidence="1">One-carbon metabolism; tetrahydrofolate interconversion.</text>
</comment>
<comment type="similarity">
    <text evidence="1">Belongs to the formate--tetrahydrofolate ligase family.</text>
</comment>
<name>FTHS_BACCZ</name>
<keyword id="KW-0067">ATP-binding</keyword>
<keyword id="KW-0436">Ligase</keyword>
<keyword id="KW-0547">Nucleotide-binding</keyword>
<keyword id="KW-0554">One-carbon metabolism</keyword>
<evidence type="ECO:0000255" key="1">
    <source>
        <dbReference type="HAMAP-Rule" id="MF_01543"/>
    </source>
</evidence>
<sequence length="562" mass="60462">MTTTTTVKSDIEIAQEASMKKIQEIAADLNILEDELEPYGHYKGKLSLDIFKRLQNEKDGKVVLVTAINPTPAGEGKSTVTVGLGQAFNKIGKKTVIALREPSLGPTMGLKGGAAGGGFSQVVPMEDINLHFTGDIHAITTANNALAAFIDNHIQQGNTLGIDTRKIVWKRCVDLNDRALRNVVIGLGGPVQGVPREDGFDITVASEIMAVFCLATDIQDLKARLSRIVVAYNFANQPVTVKDLGVEGALTLLLKDALKPNLVQTLENTPAIIHGGPFANIAHGCNSVIATTMAAKLGDYVITEAGFGADLGAEKFLDIKARAAGIKPEAVVIVATIRALKMHGGVAKDQLKEENVDALAKGMENLQKHVETIQSFGVPFVIAINKFITDTDAEVAYLQEWCNERGYAVSLTEVWEKGGQGGVDLAEKVLKEIEKGENNYAPLYELELPLEEKIRTIAQKVYGAKDIEFAPKARKQLAQYEGEGWSNLPICMAKTQYSLSDDATKLGRPSDFIVTIRELKPSIGAGFIVALTGTMLTMPGLPKQPAALQMDVNEDGKAVGLF</sequence>
<feature type="chain" id="PRO_0000199330" description="Formate--tetrahydrofolate ligase">
    <location>
        <begin position="1"/>
        <end position="562"/>
    </location>
</feature>
<feature type="binding site" evidence="1">
    <location>
        <begin position="71"/>
        <end position="78"/>
    </location>
    <ligand>
        <name>ATP</name>
        <dbReference type="ChEBI" id="CHEBI:30616"/>
    </ligand>
</feature>
<organism>
    <name type="scientific">Bacillus cereus (strain ZK / E33L)</name>
    <dbReference type="NCBI Taxonomy" id="288681"/>
    <lineage>
        <taxon>Bacteria</taxon>
        <taxon>Bacillati</taxon>
        <taxon>Bacillota</taxon>
        <taxon>Bacilli</taxon>
        <taxon>Bacillales</taxon>
        <taxon>Bacillaceae</taxon>
        <taxon>Bacillus</taxon>
        <taxon>Bacillus cereus group</taxon>
    </lineage>
</organism>
<gene>
    <name evidence="1" type="primary">fhs</name>
    <name type="ordered locus">BCE33L1914</name>
</gene>
<accession>Q63C61</accession>
<proteinExistence type="inferred from homology"/>